<organism>
    <name type="scientific">Gracilaria tenuistipitata var. liui</name>
    <name type="common">Red alga</name>
    <dbReference type="NCBI Taxonomy" id="285951"/>
    <lineage>
        <taxon>Eukaryota</taxon>
        <taxon>Rhodophyta</taxon>
        <taxon>Florideophyceae</taxon>
        <taxon>Rhodymeniophycidae</taxon>
        <taxon>Gracilariales</taxon>
        <taxon>Gracilariaceae</taxon>
        <taxon>Gracilaria</taxon>
        <taxon>Gracilaria tenuistipitata</taxon>
    </lineage>
</organism>
<sequence length="66" mass="7942">MPLPKIQDIQDFTDKEIEEKIIKLKKEIFDLKLKQATRQNVRSHLFKHKKHQLAQLLTIKKDSNYV</sequence>
<gene>
    <name evidence="1" type="primary">rpl29</name>
    <name type="ordered locus">Grc000093</name>
</gene>
<dbReference type="EMBL" id="AY673996">
    <property type="protein sequence ID" value="AAT79674.1"/>
    <property type="molecule type" value="Genomic_DNA"/>
</dbReference>
<dbReference type="RefSeq" id="YP_063599.1">
    <property type="nucleotide sequence ID" value="NC_006137.1"/>
</dbReference>
<dbReference type="SMR" id="Q6B8W1"/>
<dbReference type="GeneID" id="2944064"/>
<dbReference type="GO" id="GO:0009507">
    <property type="term" value="C:chloroplast"/>
    <property type="evidence" value="ECO:0007669"/>
    <property type="project" value="UniProtKB-SubCell"/>
</dbReference>
<dbReference type="GO" id="GO:0022625">
    <property type="term" value="C:cytosolic large ribosomal subunit"/>
    <property type="evidence" value="ECO:0007669"/>
    <property type="project" value="TreeGrafter"/>
</dbReference>
<dbReference type="GO" id="GO:0003735">
    <property type="term" value="F:structural constituent of ribosome"/>
    <property type="evidence" value="ECO:0007669"/>
    <property type="project" value="InterPro"/>
</dbReference>
<dbReference type="GO" id="GO:0006412">
    <property type="term" value="P:translation"/>
    <property type="evidence" value="ECO:0007669"/>
    <property type="project" value="UniProtKB-UniRule"/>
</dbReference>
<dbReference type="CDD" id="cd00427">
    <property type="entry name" value="Ribosomal_L29_HIP"/>
    <property type="match status" value="1"/>
</dbReference>
<dbReference type="Gene3D" id="1.10.287.310">
    <property type="match status" value="1"/>
</dbReference>
<dbReference type="HAMAP" id="MF_00374">
    <property type="entry name" value="Ribosomal_uL29"/>
    <property type="match status" value="1"/>
</dbReference>
<dbReference type="InterPro" id="IPR050063">
    <property type="entry name" value="Ribosomal_protein_uL29"/>
</dbReference>
<dbReference type="InterPro" id="IPR001854">
    <property type="entry name" value="Ribosomal_uL29"/>
</dbReference>
<dbReference type="InterPro" id="IPR036049">
    <property type="entry name" value="Ribosomal_uL29_sf"/>
</dbReference>
<dbReference type="NCBIfam" id="TIGR00012">
    <property type="entry name" value="L29"/>
    <property type="match status" value="1"/>
</dbReference>
<dbReference type="PANTHER" id="PTHR10916">
    <property type="entry name" value="60S RIBOSOMAL PROTEIN L35/50S RIBOSOMAL PROTEIN L29"/>
    <property type="match status" value="1"/>
</dbReference>
<dbReference type="PANTHER" id="PTHR10916:SF0">
    <property type="entry name" value="LARGE RIBOSOMAL SUBUNIT PROTEIN UL29C"/>
    <property type="match status" value="1"/>
</dbReference>
<dbReference type="Pfam" id="PF00831">
    <property type="entry name" value="Ribosomal_L29"/>
    <property type="match status" value="1"/>
</dbReference>
<dbReference type="SUPFAM" id="SSF46561">
    <property type="entry name" value="Ribosomal protein L29 (L29p)"/>
    <property type="match status" value="1"/>
</dbReference>
<name>RK29_GRATL</name>
<reference key="1">
    <citation type="journal article" date="2004" name="J. Mol. Evol.">
        <title>Comparative analysis of the complete plastid genome sequence of the red alga Gracilaria tenuistipitata var. liui provides insights into the evolution of rhodoplasts and their relationship to other plastids.</title>
        <authorList>
            <person name="Hagopian J.C."/>
            <person name="Reis M."/>
            <person name="Kitajima J.P."/>
            <person name="Bhattacharya D."/>
            <person name="de Oliveira M.C."/>
        </authorList>
    </citation>
    <scope>NUCLEOTIDE SEQUENCE [LARGE SCALE GENOMIC DNA]</scope>
</reference>
<proteinExistence type="inferred from homology"/>
<feature type="chain" id="PRO_0000130529" description="Large ribosomal subunit protein uL29c">
    <location>
        <begin position="1"/>
        <end position="66"/>
    </location>
</feature>
<keyword id="KW-0150">Chloroplast</keyword>
<keyword id="KW-0934">Plastid</keyword>
<keyword id="KW-0687">Ribonucleoprotein</keyword>
<keyword id="KW-0689">Ribosomal protein</keyword>
<accession>Q6B8W1</accession>
<protein>
    <recommendedName>
        <fullName evidence="1">Large ribosomal subunit protein uL29c</fullName>
    </recommendedName>
    <alternativeName>
        <fullName evidence="2">50S ribosomal protein L29, chloroplastic</fullName>
    </alternativeName>
</protein>
<evidence type="ECO:0000255" key="1">
    <source>
        <dbReference type="HAMAP-Rule" id="MF_00374"/>
    </source>
</evidence>
<evidence type="ECO:0000305" key="2"/>
<comment type="subcellular location">
    <subcellularLocation>
        <location>Plastid</location>
        <location>Chloroplast</location>
    </subcellularLocation>
</comment>
<comment type="similarity">
    <text evidence="1">Belongs to the universal ribosomal protein uL29 family.</text>
</comment>
<geneLocation type="chloroplast"/>